<organism>
    <name type="scientific">Mus musculus</name>
    <name type="common">Mouse</name>
    <dbReference type="NCBI Taxonomy" id="10090"/>
    <lineage>
        <taxon>Eukaryota</taxon>
        <taxon>Metazoa</taxon>
        <taxon>Chordata</taxon>
        <taxon>Craniata</taxon>
        <taxon>Vertebrata</taxon>
        <taxon>Euteleostomi</taxon>
        <taxon>Mammalia</taxon>
        <taxon>Eutheria</taxon>
        <taxon>Euarchontoglires</taxon>
        <taxon>Glires</taxon>
        <taxon>Rodentia</taxon>
        <taxon>Myomorpha</taxon>
        <taxon>Muroidea</taxon>
        <taxon>Muridae</taxon>
        <taxon>Murinae</taxon>
        <taxon>Mus</taxon>
        <taxon>Mus</taxon>
    </lineage>
</organism>
<protein>
    <recommendedName>
        <fullName>Tyrosine--tRNA ligase, mitochondrial</fullName>
        <ecNumber evidence="2">6.1.1.1</ecNumber>
    </recommendedName>
    <alternativeName>
        <fullName>Tyrosyl-tRNA synthetase</fullName>
        <shortName>TyrRS</shortName>
    </alternativeName>
</protein>
<sequence length="472" mass="52597">MAAPMLRRLCRVPQSLVWLRGSRAVRPGARGMLVAPRARGLFKEFFPESGTKTELPELFDRRRAGSSPQTVYCGFDPTGDSLHVGHLLTLLGLFHFQRAGHNVIALVGGSTALLGDPSGRTKGREALSAECVRANAHALRRGLEALAANHARLFADGRPWGSFTVLDNAAWFQEQHLVDFLATVGGHFRMGTLLSRLSVQSRLKSPEGMSLAEFFYQVLQAYDFYYLFQHYGCRVQLGGSDQLGNIMSGYEFIHKLTGEDVFGITVPLITSTTGAKLGKSAGNAVWLNREKTSPFELYQFFVRQQDDSVERYLKLFTFLPLPEIDHIMQLHVKEPEKRVAQKRLAAEVTKLVHGQEGLDSAKRCTQALYHSSIEALEVMSDQELKELFKEASFSELVLDPGTSVIDTCRKANAIPDGPRGYRMITEGGVSINHRQVTNPESVLVIGQHILKNGLSLLKIGKRNFYIIKWLQL</sequence>
<name>SYYM_MOUSE</name>
<keyword id="KW-0007">Acetylation</keyword>
<keyword id="KW-0030">Aminoacyl-tRNA synthetase</keyword>
<keyword id="KW-0067">ATP-binding</keyword>
<keyword id="KW-0436">Ligase</keyword>
<keyword id="KW-0496">Mitochondrion</keyword>
<keyword id="KW-0547">Nucleotide-binding</keyword>
<keyword id="KW-0648">Protein biosynthesis</keyword>
<keyword id="KW-1185">Reference proteome</keyword>
<keyword id="KW-0809">Transit peptide</keyword>
<dbReference type="EC" id="6.1.1.1" evidence="2"/>
<dbReference type="EMBL" id="BC060295">
    <property type="protein sequence ID" value="AAH60295.1"/>
    <property type="molecule type" value="mRNA"/>
</dbReference>
<dbReference type="EMBL" id="AK039123">
    <property type="protein sequence ID" value="BAC30245.1"/>
    <property type="molecule type" value="mRNA"/>
</dbReference>
<dbReference type="CCDS" id="CCDS27983.1"/>
<dbReference type="RefSeq" id="NP_937889.1">
    <property type="nucleotide sequence ID" value="NM_198246.2"/>
</dbReference>
<dbReference type="SMR" id="Q8BYL4"/>
<dbReference type="BioGRID" id="213872">
    <property type="interactions" value="5"/>
</dbReference>
<dbReference type="FunCoup" id="Q8BYL4">
    <property type="interactions" value="2846"/>
</dbReference>
<dbReference type="STRING" id="10090.ENSMUSP00000055277"/>
<dbReference type="iPTMnet" id="Q8BYL4"/>
<dbReference type="PhosphoSitePlus" id="Q8BYL4"/>
<dbReference type="jPOST" id="Q8BYL4"/>
<dbReference type="PaxDb" id="10090-ENSMUSP00000055277"/>
<dbReference type="PeptideAtlas" id="Q8BYL4"/>
<dbReference type="ProteomicsDB" id="254512"/>
<dbReference type="Pumba" id="Q8BYL4"/>
<dbReference type="Antibodypedia" id="24801">
    <property type="antibodies" value="141 antibodies from 25 providers"/>
</dbReference>
<dbReference type="Ensembl" id="ENSMUST00000059955.15">
    <property type="protein sequence ID" value="ENSMUSP00000055277.9"/>
    <property type="gene ID" value="ENSMUSG00000022792.17"/>
</dbReference>
<dbReference type="GeneID" id="70120"/>
<dbReference type="KEGG" id="mmu:70120"/>
<dbReference type="UCSC" id="uc007yie.2">
    <property type="organism name" value="mouse"/>
</dbReference>
<dbReference type="AGR" id="MGI:1917370"/>
<dbReference type="CTD" id="51067"/>
<dbReference type="MGI" id="MGI:1917370">
    <property type="gene designation" value="Yars2"/>
</dbReference>
<dbReference type="VEuPathDB" id="HostDB:ENSMUSG00000022792"/>
<dbReference type="eggNOG" id="KOG2623">
    <property type="taxonomic scope" value="Eukaryota"/>
</dbReference>
<dbReference type="GeneTree" id="ENSGT00390000013709"/>
<dbReference type="HOGENOM" id="CLU_024003_1_0_1"/>
<dbReference type="InParanoid" id="Q8BYL4"/>
<dbReference type="OMA" id="YMMAKDS"/>
<dbReference type="OrthoDB" id="337870at2759"/>
<dbReference type="PhylomeDB" id="Q8BYL4"/>
<dbReference type="TreeFam" id="TF105974"/>
<dbReference type="BioGRID-ORCS" id="70120">
    <property type="hits" value="30 hits in 78 CRISPR screens"/>
</dbReference>
<dbReference type="PRO" id="PR:Q8BYL4"/>
<dbReference type="Proteomes" id="UP000000589">
    <property type="component" value="Chromosome 16"/>
</dbReference>
<dbReference type="RNAct" id="Q8BYL4">
    <property type="molecule type" value="protein"/>
</dbReference>
<dbReference type="Bgee" id="ENSMUSG00000022792">
    <property type="expression patterns" value="Expressed in epiblast (generic) and 233 other cell types or tissues"/>
</dbReference>
<dbReference type="ExpressionAtlas" id="Q8BYL4">
    <property type="expression patterns" value="baseline and differential"/>
</dbReference>
<dbReference type="GO" id="GO:0005759">
    <property type="term" value="C:mitochondrial matrix"/>
    <property type="evidence" value="ECO:0007669"/>
    <property type="project" value="UniProtKB-SubCell"/>
</dbReference>
<dbReference type="GO" id="GO:0005739">
    <property type="term" value="C:mitochondrion"/>
    <property type="evidence" value="ECO:0007005"/>
    <property type="project" value="MGI"/>
</dbReference>
<dbReference type="GO" id="GO:0016604">
    <property type="term" value="C:nuclear body"/>
    <property type="evidence" value="ECO:0007669"/>
    <property type="project" value="Ensembl"/>
</dbReference>
<dbReference type="GO" id="GO:0005524">
    <property type="term" value="F:ATP binding"/>
    <property type="evidence" value="ECO:0007669"/>
    <property type="project" value="UniProtKB-KW"/>
</dbReference>
<dbReference type="GO" id="GO:0072545">
    <property type="term" value="F:L-tyrosine binding"/>
    <property type="evidence" value="ECO:0007669"/>
    <property type="project" value="Ensembl"/>
</dbReference>
<dbReference type="GO" id="GO:0042803">
    <property type="term" value="F:protein homodimerization activity"/>
    <property type="evidence" value="ECO:0007669"/>
    <property type="project" value="Ensembl"/>
</dbReference>
<dbReference type="GO" id="GO:0000049">
    <property type="term" value="F:tRNA binding"/>
    <property type="evidence" value="ECO:0007669"/>
    <property type="project" value="Ensembl"/>
</dbReference>
<dbReference type="GO" id="GO:0004831">
    <property type="term" value="F:tyrosine-tRNA ligase activity"/>
    <property type="evidence" value="ECO:0007669"/>
    <property type="project" value="UniProtKB-EC"/>
</dbReference>
<dbReference type="GO" id="GO:0070184">
    <property type="term" value="P:mitochondrial tyrosyl-tRNA aminoacylation"/>
    <property type="evidence" value="ECO:0007669"/>
    <property type="project" value="Ensembl"/>
</dbReference>
<dbReference type="CDD" id="cd00805">
    <property type="entry name" value="TyrRS_core"/>
    <property type="match status" value="1"/>
</dbReference>
<dbReference type="FunFam" id="1.10.240.10:FF:000001">
    <property type="entry name" value="Tyrosine--tRNA ligase"/>
    <property type="match status" value="1"/>
</dbReference>
<dbReference type="FunFam" id="3.10.290.10:FF:000017">
    <property type="entry name" value="Tyrosine--tRNA ligase"/>
    <property type="match status" value="1"/>
</dbReference>
<dbReference type="FunFam" id="3.40.50.620:FF:000107">
    <property type="entry name" value="Tyrosine--tRNA ligase"/>
    <property type="match status" value="1"/>
</dbReference>
<dbReference type="Gene3D" id="3.40.50.620">
    <property type="entry name" value="HUPs"/>
    <property type="match status" value="1"/>
</dbReference>
<dbReference type="Gene3D" id="3.10.290.10">
    <property type="entry name" value="RNA-binding S4 domain"/>
    <property type="match status" value="1"/>
</dbReference>
<dbReference type="Gene3D" id="1.10.240.10">
    <property type="entry name" value="Tyrosyl-Transfer RNA Synthetase"/>
    <property type="match status" value="1"/>
</dbReference>
<dbReference type="InterPro" id="IPR001412">
    <property type="entry name" value="aa-tRNA-synth_I_CS"/>
</dbReference>
<dbReference type="InterPro" id="IPR002305">
    <property type="entry name" value="aa-tRNA-synth_Ic"/>
</dbReference>
<dbReference type="InterPro" id="IPR014729">
    <property type="entry name" value="Rossmann-like_a/b/a_fold"/>
</dbReference>
<dbReference type="InterPro" id="IPR036986">
    <property type="entry name" value="S4_RNA-bd_sf"/>
</dbReference>
<dbReference type="InterPro" id="IPR002307">
    <property type="entry name" value="Tyr-tRNA-ligase"/>
</dbReference>
<dbReference type="InterPro" id="IPR024088">
    <property type="entry name" value="Tyr-tRNA-ligase_bac-type"/>
</dbReference>
<dbReference type="NCBIfam" id="TIGR00234">
    <property type="entry name" value="tyrS"/>
    <property type="match status" value="1"/>
</dbReference>
<dbReference type="PANTHER" id="PTHR11766:SF0">
    <property type="entry name" value="TYROSINE--TRNA LIGASE, MITOCHONDRIAL"/>
    <property type="match status" value="1"/>
</dbReference>
<dbReference type="PANTHER" id="PTHR11766">
    <property type="entry name" value="TYROSYL-TRNA SYNTHETASE"/>
    <property type="match status" value="1"/>
</dbReference>
<dbReference type="Pfam" id="PF00579">
    <property type="entry name" value="tRNA-synt_1b"/>
    <property type="match status" value="1"/>
</dbReference>
<dbReference type="PRINTS" id="PR01040">
    <property type="entry name" value="TRNASYNTHTYR"/>
</dbReference>
<dbReference type="SUPFAM" id="SSF55174">
    <property type="entry name" value="Alpha-L RNA-binding motif"/>
    <property type="match status" value="1"/>
</dbReference>
<dbReference type="SUPFAM" id="SSF52374">
    <property type="entry name" value="Nucleotidylyl transferase"/>
    <property type="match status" value="1"/>
</dbReference>
<dbReference type="PROSITE" id="PS00178">
    <property type="entry name" value="AA_TRNA_LIGASE_I"/>
    <property type="match status" value="1"/>
</dbReference>
<evidence type="ECO:0000250" key="1"/>
<evidence type="ECO:0000250" key="2">
    <source>
        <dbReference type="UniProtKB" id="Q9Y2Z4"/>
    </source>
</evidence>
<evidence type="ECO:0000255" key="3"/>
<evidence type="ECO:0000305" key="4"/>
<evidence type="ECO:0007744" key="5">
    <source>
    </source>
</evidence>
<reference key="1">
    <citation type="journal article" date="2004" name="Genome Res.">
        <title>The status, quality, and expansion of the NIH full-length cDNA project: the Mammalian Gene Collection (MGC).</title>
        <authorList>
            <consortium name="The MGC Project Team"/>
        </authorList>
    </citation>
    <scope>NUCLEOTIDE SEQUENCE [LARGE SCALE MRNA]</scope>
    <source>
        <tissue>Jaw</tissue>
        <tissue>Limb</tissue>
    </source>
</reference>
<reference key="2">
    <citation type="journal article" date="2005" name="Science">
        <title>The transcriptional landscape of the mammalian genome.</title>
        <authorList>
            <person name="Carninci P."/>
            <person name="Kasukawa T."/>
            <person name="Katayama S."/>
            <person name="Gough J."/>
            <person name="Frith M.C."/>
            <person name="Maeda N."/>
            <person name="Oyama R."/>
            <person name="Ravasi T."/>
            <person name="Lenhard B."/>
            <person name="Wells C."/>
            <person name="Kodzius R."/>
            <person name="Shimokawa K."/>
            <person name="Bajic V.B."/>
            <person name="Brenner S.E."/>
            <person name="Batalov S."/>
            <person name="Forrest A.R."/>
            <person name="Zavolan M."/>
            <person name="Davis M.J."/>
            <person name="Wilming L.G."/>
            <person name="Aidinis V."/>
            <person name="Allen J.E."/>
            <person name="Ambesi-Impiombato A."/>
            <person name="Apweiler R."/>
            <person name="Aturaliya R.N."/>
            <person name="Bailey T.L."/>
            <person name="Bansal M."/>
            <person name="Baxter L."/>
            <person name="Beisel K.W."/>
            <person name="Bersano T."/>
            <person name="Bono H."/>
            <person name="Chalk A.M."/>
            <person name="Chiu K.P."/>
            <person name="Choudhary V."/>
            <person name="Christoffels A."/>
            <person name="Clutterbuck D.R."/>
            <person name="Crowe M.L."/>
            <person name="Dalla E."/>
            <person name="Dalrymple B.P."/>
            <person name="de Bono B."/>
            <person name="Della Gatta G."/>
            <person name="di Bernardo D."/>
            <person name="Down T."/>
            <person name="Engstrom P."/>
            <person name="Fagiolini M."/>
            <person name="Faulkner G."/>
            <person name="Fletcher C.F."/>
            <person name="Fukushima T."/>
            <person name="Furuno M."/>
            <person name="Futaki S."/>
            <person name="Gariboldi M."/>
            <person name="Georgii-Hemming P."/>
            <person name="Gingeras T.R."/>
            <person name="Gojobori T."/>
            <person name="Green R.E."/>
            <person name="Gustincich S."/>
            <person name="Harbers M."/>
            <person name="Hayashi Y."/>
            <person name="Hensch T.K."/>
            <person name="Hirokawa N."/>
            <person name="Hill D."/>
            <person name="Huminiecki L."/>
            <person name="Iacono M."/>
            <person name="Ikeo K."/>
            <person name="Iwama A."/>
            <person name="Ishikawa T."/>
            <person name="Jakt M."/>
            <person name="Kanapin A."/>
            <person name="Katoh M."/>
            <person name="Kawasawa Y."/>
            <person name="Kelso J."/>
            <person name="Kitamura H."/>
            <person name="Kitano H."/>
            <person name="Kollias G."/>
            <person name="Krishnan S.P."/>
            <person name="Kruger A."/>
            <person name="Kummerfeld S.K."/>
            <person name="Kurochkin I.V."/>
            <person name="Lareau L.F."/>
            <person name="Lazarevic D."/>
            <person name="Lipovich L."/>
            <person name="Liu J."/>
            <person name="Liuni S."/>
            <person name="McWilliam S."/>
            <person name="Madan Babu M."/>
            <person name="Madera M."/>
            <person name="Marchionni L."/>
            <person name="Matsuda H."/>
            <person name="Matsuzawa S."/>
            <person name="Miki H."/>
            <person name="Mignone F."/>
            <person name="Miyake S."/>
            <person name="Morris K."/>
            <person name="Mottagui-Tabar S."/>
            <person name="Mulder N."/>
            <person name="Nakano N."/>
            <person name="Nakauchi H."/>
            <person name="Ng P."/>
            <person name="Nilsson R."/>
            <person name="Nishiguchi S."/>
            <person name="Nishikawa S."/>
            <person name="Nori F."/>
            <person name="Ohara O."/>
            <person name="Okazaki Y."/>
            <person name="Orlando V."/>
            <person name="Pang K.C."/>
            <person name="Pavan W.J."/>
            <person name="Pavesi G."/>
            <person name="Pesole G."/>
            <person name="Petrovsky N."/>
            <person name="Piazza S."/>
            <person name="Reed J."/>
            <person name="Reid J.F."/>
            <person name="Ring B.Z."/>
            <person name="Ringwald M."/>
            <person name="Rost B."/>
            <person name="Ruan Y."/>
            <person name="Salzberg S.L."/>
            <person name="Sandelin A."/>
            <person name="Schneider C."/>
            <person name="Schoenbach C."/>
            <person name="Sekiguchi K."/>
            <person name="Semple C.A."/>
            <person name="Seno S."/>
            <person name="Sessa L."/>
            <person name="Sheng Y."/>
            <person name="Shibata Y."/>
            <person name="Shimada H."/>
            <person name="Shimada K."/>
            <person name="Silva D."/>
            <person name="Sinclair B."/>
            <person name="Sperling S."/>
            <person name="Stupka E."/>
            <person name="Sugiura K."/>
            <person name="Sultana R."/>
            <person name="Takenaka Y."/>
            <person name="Taki K."/>
            <person name="Tammoja K."/>
            <person name="Tan S.L."/>
            <person name="Tang S."/>
            <person name="Taylor M.S."/>
            <person name="Tegner J."/>
            <person name="Teichmann S.A."/>
            <person name="Ueda H.R."/>
            <person name="van Nimwegen E."/>
            <person name="Verardo R."/>
            <person name="Wei C.L."/>
            <person name="Yagi K."/>
            <person name="Yamanishi H."/>
            <person name="Zabarovsky E."/>
            <person name="Zhu S."/>
            <person name="Zimmer A."/>
            <person name="Hide W."/>
            <person name="Bult C."/>
            <person name="Grimmond S.M."/>
            <person name="Teasdale R.D."/>
            <person name="Liu E.T."/>
            <person name="Brusic V."/>
            <person name="Quackenbush J."/>
            <person name="Wahlestedt C."/>
            <person name="Mattick J.S."/>
            <person name="Hume D.A."/>
            <person name="Kai C."/>
            <person name="Sasaki D."/>
            <person name="Tomaru Y."/>
            <person name="Fukuda S."/>
            <person name="Kanamori-Katayama M."/>
            <person name="Suzuki M."/>
            <person name="Aoki J."/>
            <person name="Arakawa T."/>
            <person name="Iida J."/>
            <person name="Imamura K."/>
            <person name="Itoh M."/>
            <person name="Kato T."/>
            <person name="Kawaji H."/>
            <person name="Kawagashira N."/>
            <person name="Kawashima T."/>
            <person name="Kojima M."/>
            <person name="Kondo S."/>
            <person name="Konno H."/>
            <person name="Nakano K."/>
            <person name="Ninomiya N."/>
            <person name="Nishio T."/>
            <person name="Okada M."/>
            <person name="Plessy C."/>
            <person name="Shibata K."/>
            <person name="Shiraki T."/>
            <person name="Suzuki S."/>
            <person name="Tagami M."/>
            <person name="Waki K."/>
            <person name="Watahiki A."/>
            <person name="Okamura-Oho Y."/>
            <person name="Suzuki H."/>
            <person name="Kawai J."/>
            <person name="Hayashizaki Y."/>
        </authorList>
    </citation>
    <scope>NUCLEOTIDE SEQUENCE [LARGE SCALE MRNA] OF 70-472</scope>
    <source>
        <strain>C57BL/6J</strain>
        <tissue>Hypothalamus</tissue>
    </source>
</reference>
<reference key="3">
    <citation type="journal article" date="2010" name="Cell">
        <title>A tissue-specific atlas of mouse protein phosphorylation and expression.</title>
        <authorList>
            <person name="Huttlin E.L."/>
            <person name="Jedrychowski M.P."/>
            <person name="Elias J.E."/>
            <person name="Goswami T."/>
            <person name="Rad R."/>
            <person name="Beausoleil S.A."/>
            <person name="Villen J."/>
            <person name="Haas W."/>
            <person name="Sowa M.E."/>
            <person name="Gygi S.P."/>
        </authorList>
    </citation>
    <scope>IDENTIFICATION BY MASS SPECTROMETRY [LARGE SCALE ANALYSIS]</scope>
    <source>
        <tissue>Brain</tissue>
        <tissue>Brown adipose tissue</tissue>
        <tissue>Heart</tissue>
        <tissue>Kidney</tissue>
        <tissue>Liver</tissue>
        <tissue>Spleen</tissue>
        <tissue>Testis</tissue>
    </source>
</reference>
<reference key="4">
    <citation type="journal article" date="2013" name="Proc. Natl. Acad. Sci. U.S.A.">
        <title>Label-free quantitative proteomics of the lysine acetylome in mitochondria identifies substrates of SIRT3 in metabolic pathways.</title>
        <authorList>
            <person name="Rardin M.J."/>
            <person name="Newman J.C."/>
            <person name="Held J.M."/>
            <person name="Cusack M.P."/>
            <person name="Sorensen D.J."/>
            <person name="Li B."/>
            <person name="Schilling B."/>
            <person name="Mooney S.D."/>
            <person name="Kahn C.R."/>
            <person name="Verdin E."/>
            <person name="Gibson B.W."/>
        </authorList>
    </citation>
    <scope>ACETYLATION [LARGE SCALE ANALYSIS] AT LYS-362</scope>
    <scope>IDENTIFICATION BY MASS SPECTROMETRY [LARGE SCALE ANALYSIS]</scope>
    <source>
        <tissue>Liver</tissue>
    </source>
</reference>
<proteinExistence type="evidence at protein level"/>
<accession>Q8BYL4</accession>
<accession>Q6PAH7</accession>
<gene>
    <name type="primary">Yars2</name>
</gene>
<feature type="transit peptide" description="Mitochondrion" evidence="3">
    <location>
        <begin position="1"/>
        <end status="unknown"/>
    </location>
</feature>
<feature type="chain" id="PRO_0000035831" description="Tyrosine--tRNA ligase, mitochondrial">
    <location>
        <begin status="unknown"/>
        <end position="472"/>
    </location>
</feature>
<feature type="short sequence motif" description="'HIGH' region">
    <location>
        <begin position="77"/>
        <end position="86"/>
    </location>
</feature>
<feature type="short sequence motif" description="'KMSKS' region">
    <location>
        <begin position="276"/>
        <end position="280"/>
    </location>
</feature>
<feature type="binding site" evidence="2">
    <location>
        <position position="72"/>
    </location>
    <ligand>
        <name>L-tyrosine</name>
        <dbReference type="ChEBI" id="CHEBI:58315"/>
    </ligand>
</feature>
<feature type="binding site" evidence="2">
    <location>
        <position position="76"/>
    </location>
    <ligand>
        <name>ATP</name>
        <dbReference type="ChEBI" id="CHEBI:30616"/>
    </ligand>
</feature>
<feature type="binding site" evidence="2">
    <location>
        <position position="116"/>
    </location>
    <ligand>
        <name>L-tyrosine</name>
        <dbReference type="ChEBI" id="CHEBI:58315"/>
    </ligand>
</feature>
<feature type="binding site" evidence="2">
    <location>
        <position position="216"/>
    </location>
    <ligand>
        <name>L-tyrosine</name>
        <dbReference type="ChEBI" id="CHEBI:58315"/>
    </ligand>
</feature>
<feature type="binding site" evidence="2">
    <location>
        <position position="220"/>
    </location>
    <ligand>
        <name>L-tyrosine</name>
        <dbReference type="ChEBI" id="CHEBI:58315"/>
    </ligand>
</feature>
<feature type="binding site" evidence="2">
    <location>
        <position position="223"/>
    </location>
    <ligand>
        <name>L-tyrosine</name>
        <dbReference type="ChEBI" id="CHEBI:58315"/>
    </ligand>
</feature>
<feature type="binding site" evidence="2">
    <location>
        <position position="242"/>
    </location>
    <ligand>
        <name>L-tyrosine</name>
        <dbReference type="ChEBI" id="CHEBI:58315"/>
    </ligand>
</feature>
<feature type="binding site" evidence="2">
    <location>
        <position position="269"/>
    </location>
    <ligand>
        <name>ATP</name>
        <dbReference type="ChEBI" id="CHEBI:30616"/>
    </ligand>
</feature>
<feature type="binding site" evidence="1">
    <location>
        <position position="279"/>
    </location>
    <ligand>
        <name>ATP</name>
        <dbReference type="ChEBI" id="CHEBI:30616"/>
    </ligand>
</feature>
<feature type="modified residue" description="N6-acetyllysine" evidence="2">
    <location>
        <position position="350"/>
    </location>
</feature>
<feature type="modified residue" description="N6-acetyllysine" evidence="5">
    <location>
        <position position="362"/>
    </location>
</feature>
<comment type="function">
    <text evidence="2">Catalyzes the attachment of tyrosine to tRNA(Tyr) in a two-step reaction: tyrosine is first activated by ATP to form Tyr-AMP and then transferred to the acceptor end of tRNA(Tyr).</text>
</comment>
<comment type="catalytic activity">
    <reaction evidence="2">
        <text>tRNA(Tyr) + L-tyrosine + ATP = L-tyrosyl-tRNA(Tyr) + AMP + diphosphate + H(+)</text>
        <dbReference type="Rhea" id="RHEA:10220"/>
        <dbReference type="Rhea" id="RHEA-COMP:9706"/>
        <dbReference type="Rhea" id="RHEA-COMP:9707"/>
        <dbReference type="ChEBI" id="CHEBI:15378"/>
        <dbReference type="ChEBI" id="CHEBI:30616"/>
        <dbReference type="ChEBI" id="CHEBI:33019"/>
        <dbReference type="ChEBI" id="CHEBI:58315"/>
        <dbReference type="ChEBI" id="CHEBI:78442"/>
        <dbReference type="ChEBI" id="CHEBI:78536"/>
        <dbReference type="ChEBI" id="CHEBI:456215"/>
        <dbReference type="EC" id="6.1.1.1"/>
    </reaction>
</comment>
<comment type="subunit">
    <text evidence="2">Homodimer.</text>
</comment>
<comment type="subcellular location">
    <subcellularLocation>
        <location evidence="2">Mitochondrion matrix</location>
    </subcellularLocation>
</comment>
<comment type="similarity">
    <text evidence="4">Belongs to the class-I aminoacyl-tRNA synthetase family.</text>
</comment>